<accession>A0A0G2JXT6</accession>
<dbReference type="EC" id="3.1.3.95" evidence="3"/>
<dbReference type="EMBL" id="AABR07018115">
    <property type="status" value="NOT_ANNOTATED_CDS"/>
    <property type="molecule type" value="Genomic_DNA"/>
</dbReference>
<dbReference type="RefSeq" id="NP_001381640.1">
    <property type="nucleotide sequence ID" value="NM_001394711.1"/>
</dbReference>
<dbReference type="RefSeq" id="XP_006252173.1">
    <property type="nucleotide sequence ID" value="XM_006252111.2"/>
</dbReference>
<dbReference type="SMR" id="A0A0G2JXT6"/>
<dbReference type="FunCoup" id="A0A0G2JXT6">
    <property type="interactions" value="1534"/>
</dbReference>
<dbReference type="STRING" id="10116.ENSRNOP00000070397"/>
<dbReference type="PhosphoSitePlus" id="A0A0G2JXT6"/>
<dbReference type="jPOST" id="A0A0G2JXT6"/>
<dbReference type="Ensembl" id="ENSRNOT00000082665.2">
    <property type="protein sequence ID" value="ENSRNOP00000070397.1"/>
    <property type="gene ID" value="ENSRNOG00000012918.8"/>
</dbReference>
<dbReference type="GeneID" id="305935"/>
<dbReference type="AGR" id="RGD:1305378"/>
<dbReference type="RGD" id="1305378">
    <property type="gene designation" value="Mtmr6"/>
</dbReference>
<dbReference type="GeneTree" id="ENSGT00940000158055"/>
<dbReference type="InParanoid" id="A0A0G2JXT6"/>
<dbReference type="Reactome" id="R-RNO-1660499">
    <property type="pathway name" value="Synthesis of PIPs at the plasma membrane"/>
</dbReference>
<dbReference type="PRO" id="PR:A0A0G2JXT6"/>
<dbReference type="Proteomes" id="UP000002494">
    <property type="component" value="Chromosome 15"/>
</dbReference>
<dbReference type="Bgee" id="ENSRNOG00000012918">
    <property type="expression patterns" value="Expressed in adult mammalian kidney and 19 other cell types or tissues"/>
</dbReference>
<dbReference type="ExpressionAtlas" id="A0A0G2JXT6">
    <property type="expression patterns" value="baseline and differential"/>
</dbReference>
<dbReference type="GO" id="GO:0005737">
    <property type="term" value="C:cytoplasm"/>
    <property type="evidence" value="ECO:0000318"/>
    <property type="project" value="GO_Central"/>
</dbReference>
<dbReference type="GO" id="GO:0005783">
    <property type="term" value="C:endoplasmic reticulum"/>
    <property type="evidence" value="ECO:0007669"/>
    <property type="project" value="UniProtKB-SubCell"/>
</dbReference>
<dbReference type="GO" id="GO:0005793">
    <property type="term" value="C:endoplasmic reticulum-Golgi intermediate compartment"/>
    <property type="evidence" value="ECO:0007669"/>
    <property type="project" value="UniProtKB-SubCell"/>
</dbReference>
<dbReference type="GO" id="GO:0005635">
    <property type="term" value="C:nuclear envelope"/>
    <property type="evidence" value="ECO:0000266"/>
    <property type="project" value="RGD"/>
</dbReference>
<dbReference type="GO" id="GO:0048471">
    <property type="term" value="C:perinuclear region of cytoplasm"/>
    <property type="evidence" value="ECO:0007669"/>
    <property type="project" value="UniProtKB-SubCell"/>
</dbReference>
<dbReference type="GO" id="GO:0032587">
    <property type="term" value="C:ruffle membrane"/>
    <property type="evidence" value="ECO:0007669"/>
    <property type="project" value="UniProtKB-SubCell"/>
</dbReference>
<dbReference type="GO" id="GO:0052629">
    <property type="term" value="F:phosphatidylinositol-3,5-bisphosphate 3-phosphatase activity"/>
    <property type="evidence" value="ECO:0007669"/>
    <property type="project" value="UniProtKB-EC"/>
</dbReference>
<dbReference type="GO" id="GO:0106018">
    <property type="term" value="F:phosphatidylinositol-3,5-bisphosphate phosphatase activity"/>
    <property type="evidence" value="ECO:0000266"/>
    <property type="project" value="RGD"/>
</dbReference>
<dbReference type="GO" id="GO:0004438">
    <property type="term" value="F:phosphatidylinositol-3-phosphate phosphatase activity"/>
    <property type="evidence" value="ECO:0000266"/>
    <property type="project" value="RGD"/>
</dbReference>
<dbReference type="GO" id="GO:0006897">
    <property type="term" value="P:endocytosis"/>
    <property type="evidence" value="ECO:0007669"/>
    <property type="project" value="UniProtKB-KW"/>
</dbReference>
<dbReference type="GO" id="GO:0046856">
    <property type="term" value="P:phosphatidylinositol dephosphorylation"/>
    <property type="evidence" value="ECO:0000266"/>
    <property type="project" value="RGD"/>
</dbReference>
<dbReference type="CDD" id="cd13343">
    <property type="entry name" value="PH-GRAM_MTMR6"/>
    <property type="match status" value="1"/>
</dbReference>
<dbReference type="FunFam" id="2.30.29.30:FF:000135">
    <property type="entry name" value="Myotubularin related protein 6"/>
    <property type="match status" value="1"/>
</dbReference>
<dbReference type="Gene3D" id="2.30.29.30">
    <property type="entry name" value="Pleckstrin-homology domain (PH domain)/Phosphotyrosine-binding domain (PTB)"/>
    <property type="match status" value="1"/>
</dbReference>
<dbReference type="InterPro" id="IPR035998">
    <property type="entry name" value="MTMR6_PH-GRAM"/>
</dbReference>
<dbReference type="InterPro" id="IPR030564">
    <property type="entry name" value="Myotubularin"/>
</dbReference>
<dbReference type="InterPro" id="IPR010569">
    <property type="entry name" value="Myotubularin-like_Pase_dom"/>
</dbReference>
<dbReference type="InterPro" id="IPR011993">
    <property type="entry name" value="PH-like_dom_sf"/>
</dbReference>
<dbReference type="InterPro" id="IPR029021">
    <property type="entry name" value="Prot-tyrosine_phosphatase-like"/>
</dbReference>
<dbReference type="InterPro" id="IPR016130">
    <property type="entry name" value="Tyr_Pase_AS"/>
</dbReference>
<dbReference type="InterPro" id="IPR003595">
    <property type="entry name" value="Tyr_Pase_cat"/>
</dbReference>
<dbReference type="PANTHER" id="PTHR10807">
    <property type="entry name" value="MYOTUBULARIN-RELATED"/>
    <property type="match status" value="1"/>
</dbReference>
<dbReference type="PANTHER" id="PTHR10807:SF34">
    <property type="entry name" value="MYOTUBULARIN-RELATED PROTEIN 6"/>
    <property type="match status" value="1"/>
</dbReference>
<dbReference type="Pfam" id="PF06602">
    <property type="entry name" value="Myotub-related"/>
    <property type="match status" value="1"/>
</dbReference>
<dbReference type="Pfam" id="PF21098">
    <property type="entry name" value="PH-GRAM_MTMR6-like"/>
    <property type="match status" value="1"/>
</dbReference>
<dbReference type="SMART" id="SM00404">
    <property type="entry name" value="PTPc_motif"/>
    <property type="match status" value="1"/>
</dbReference>
<dbReference type="SUPFAM" id="SSF52799">
    <property type="entry name" value="(Phosphotyrosine protein) phosphatases II"/>
    <property type="match status" value="2"/>
</dbReference>
<dbReference type="SUPFAM" id="SSF50729">
    <property type="entry name" value="PH domain-like"/>
    <property type="match status" value="1"/>
</dbReference>
<dbReference type="PROSITE" id="PS51339">
    <property type="entry name" value="PPASE_MYOTUBULARIN"/>
    <property type="match status" value="1"/>
</dbReference>
<dbReference type="PROSITE" id="PS00383">
    <property type="entry name" value="TYR_PHOSPHATASE_1"/>
    <property type="match status" value="1"/>
</dbReference>
<gene>
    <name evidence="10" type="primary">Mtmr6</name>
</gene>
<reference evidence="9" key="1">
    <citation type="journal article" date="2004" name="Nature">
        <title>Genome sequence of the Brown Norway rat yields insights into mammalian evolution.</title>
        <authorList>
            <person name="Gibbs R.A."/>
            <person name="Weinstock G.M."/>
            <person name="Metzker M.L."/>
            <person name="Muzny D.M."/>
            <person name="Sodergren E.J."/>
            <person name="Scherer S."/>
            <person name="Scott G."/>
            <person name="Steffen D."/>
            <person name="Worley K.C."/>
            <person name="Burch P.E."/>
            <person name="Okwuonu G."/>
            <person name="Hines S."/>
            <person name="Lewis L."/>
            <person name="Deramo C."/>
            <person name="Delgado O."/>
            <person name="Dugan-Rocha S."/>
            <person name="Miner G."/>
            <person name="Morgan M."/>
            <person name="Hawes A."/>
            <person name="Gill R."/>
            <person name="Holt R.A."/>
            <person name="Adams M.D."/>
            <person name="Amanatides P.G."/>
            <person name="Baden-Tillson H."/>
            <person name="Barnstead M."/>
            <person name="Chin S."/>
            <person name="Evans C.A."/>
            <person name="Ferriera S."/>
            <person name="Fosler C."/>
            <person name="Glodek A."/>
            <person name="Gu Z."/>
            <person name="Jennings D."/>
            <person name="Kraft C.L."/>
            <person name="Nguyen T."/>
            <person name="Pfannkoch C.M."/>
            <person name="Sitter C."/>
            <person name="Sutton G.G."/>
            <person name="Venter J.C."/>
            <person name="Woodage T."/>
            <person name="Smith D."/>
            <person name="Lee H.-M."/>
            <person name="Gustafson E."/>
            <person name="Cahill P."/>
            <person name="Kana A."/>
            <person name="Doucette-Stamm L."/>
            <person name="Weinstock K."/>
            <person name="Fechtel K."/>
            <person name="Weiss R.B."/>
            <person name="Dunn D.M."/>
            <person name="Green E.D."/>
            <person name="Blakesley R.W."/>
            <person name="Bouffard G.G."/>
            <person name="De Jong P.J."/>
            <person name="Osoegawa K."/>
            <person name="Zhu B."/>
            <person name="Marra M."/>
            <person name="Schein J."/>
            <person name="Bosdet I."/>
            <person name="Fjell C."/>
            <person name="Jones S."/>
            <person name="Krzywinski M."/>
            <person name="Mathewson C."/>
            <person name="Siddiqui A."/>
            <person name="Wye N."/>
            <person name="McPherson J."/>
            <person name="Zhao S."/>
            <person name="Fraser C.M."/>
            <person name="Shetty J."/>
            <person name="Shatsman S."/>
            <person name="Geer K."/>
            <person name="Chen Y."/>
            <person name="Abramzon S."/>
            <person name="Nierman W.C."/>
            <person name="Havlak P.H."/>
            <person name="Chen R."/>
            <person name="Durbin K.J."/>
            <person name="Egan A."/>
            <person name="Ren Y."/>
            <person name="Song X.-Z."/>
            <person name="Li B."/>
            <person name="Liu Y."/>
            <person name="Qin X."/>
            <person name="Cawley S."/>
            <person name="Cooney A.J."/>
            <person name="D'Souza L.M."/>
            <person name="Martin K."/>
            <person name="Wu J.Q."/>
            <person name="Gonzalez-Garay M.L."/>
            <person name="Jackson A.R."/>
            <person name="Kalafus K.J."/>
            <person name="McLeod M.P."/>
            <person name="Milosavljevic A."/>
            <person name="Virk D."/>
            <person name="Volkov A."/>
            <person name="Wheeler D.A."/>
            <person name="Zhang Z."/>
            <person name="Bailey J.A."/>
            <person name="Eichler E.E."/>
            <person name="Tuzun E."/>
            <person name="Birney E."/>
            <person name="Mongin E."/>
            <person name="Ureta-Vidal A."/>
            <person name="Woodwark C."/>
            <person name="Zdobnov E."/>
            <person name="Bork P."/>
            <person name="Suyama M."/>
            <person name="Torrents D."/>
            <person name="Alexandersson M."/>
            <person name="Trask B.J."/>
            <person name="Young J.M."/>
            <person name="Huang H."/>
            <person name="Wang H."/>
            <person name="Xing H."/>
            <person name="Daniels S."/>
            <person name="Gietzen D."/>
            <person name="Schmidt J."/>
            <person name="Stevens K."/>
            <person name="Vitt U."/>
            <person name="Wingrove J."/>
            <person name="Camara F."/>
            <person name="Mar Alba M."/>
            <person name="Abril J.F."/>
            <person name="Guigo R."/>
            <person name="Smit A."/>
            <person name="Dubchak I."/>
            <person name="Rubin E.M."/>
            <person name="Couronne O."/>
            <person name="Poliakov A."/>
            <person name="Huebner N."/>
            <person name="Ganten D."/>
            <person name="Goesele C."/>
            <person name="Hummel O."/>
            <person name="Kreitler T."/>
            <person name="Lee Y.-A."/>
            <person name="Monti J."/>
            <person name="Schulz H."/>
            <person name="Zimdahl H."/>
            <person name="Himmelbauer H."/>
            <person name="Lehrach H."/>
            <person name="Jacob H.J."/>
            <person name="Bromberg S."/>
            <person name="Gullings-Handley J."/>
            <person name="Jensen-Seaman M.I."/>
            <person name="Kwitek A.E."/>
            <person name="Lazar J."/>
            <person name="Pasko D."/>
            <person name="Tonellato P.J."/>
            <person name="Twigger S."/>
            <person name="Ponting C.P."/>
            <person name="Duarte J.M."/>
            <person name="Rice S."/>
            <person name="Goodstadt L."/>
            <person name="Beatson S.A."/>
            <person name="Emes R.D."/>
            <person name="Winter E.E."/>
            <person name="Webber C."/>
            <person name="Brandt P."/>
            <person name="Nyakatura G."/>
            <person name="Adetobi M."/>
            <person name="Chiaromonte F."/>
            <person name="Elnitski L."/>
            <person name="Eswara P."/>
            <person name="Hardison R.C."/>
            <person name="Hou M."/>
            <person name="Kolbe D."/>
            <person name="Makova K."/>
            <person name="Miller W."/>
            <person name="Nekrutenko A."/>
            <person name="Riemer C."/>
            <person name="Schwartz S."/>
            <person name="Taylor J."/>
            <person name="Yang S."/>
            <person name="Zhang Y."/>
            <person name="Lindpaintner K."/>
            <person name="Andrews T.D."/>
            <person name="Caccamo M."/>
            <person name="Clamp M."/>
            <person name="Clarke L."/>
            <person name="Curwen V."/>
            <person name="Durbin R.M."/>
            <person name="Eyras E."/>
            <person name="Searle S.M."/>
            <person name="Cooper G.M."/>
            <person name="Batzoglou S."/>
            <person name="Brudno M."/>
            <person name="Sidow A."/>
            <person name="Stone E.A."/>
            <person name="Payseur B.A."/>
            <person name="Bourque G."/>
            <person name="Lopez-Otin C."/>
            <person name="Puente X.S."/>
            <person name="Chakrabarti K."/>
            <person name="Chatterji S."/>
            <person name="Dewey C."/>
            <person name="Pachter L."/>
            <person name="Bray N."/>
            <person name="Yap V.B."/>
            <person name="Caspi A."/>
            <person name="Tesler G."/>
            <person name="Pevzner P.A."/>
            <person name="Haussler D."/>
            <person name="Roskin K.M."/>
            <person name="Baertsch R."/>
            <person name="Clawson H."/>
            <person name="Furey T.S."/>
            <person name="Hinrichs A.S."/>
            <person name="Karolchik D."/>
            <person name="Kent W.J."/>
            <person name="Rosenbloom K.R."/>
            <person name="Trumbower H."/>
            <person name="Weirauch M."/>
            <person name="Cooper D.N."/>
            <person name="Stenson P.D."/>
            <person name="Ma B."/>
            <person name="Brent M."/>
            <person name="Arumugam M."/>
            <person name="Shteynberg D."/>
            <person name="Copley R.R."/>
            <person name="Taylor M.S."/>
            <person name="Riethman H."/>
            <person name="Mudunuri U."/>
            <person name="Peterson J."/>
            <person name="Guyer M."/>
            <person name="Felsenfeld A."/>
            <person name="Old S."/>
            <person name="Mockrin S."/>
            <person name="Collins F.S."/>
        </authorList>
    </citation>
    <scope>NUCLEOTIDE SEQUENCE [LARGE SCALE GENOMIC DNA]</scope>
    <source>
        <strain evidence="9">Brown Norway</strain>
    </source>
</reference>
<reference evidence="11" key="2">
    <citation type="journal article" date="2012" name="Nat. Commun.">
        <title>Quantitative maps of protein phosphorylation sites across 14 different rat organs and tissues.</title>
        <authorList>
            <person name="Lundby A."/>
            <person name="Secher A."/>
            <person name="Lage K."/>
            <person name="Nordsborg N.B."/>
            <person name="Dmytriyev A."/>
            <person name="Lundby C."/>
            <person name="Olsen J.V."/>
        </authorList>
    </citation>
    <scope>IDENTIFICATION BY MASS SPECTROMETRY [LARGE SCALE ANALYSIS]</scope>
</reference>
<reference evidence="8" key="3">
    <citation type="journal article" date="2013" name="J. Biol. Chem.">
        <title>Phosphatidylinositol 3-phosphatase myotubularin-related protein 6 (MTMR6) is regulated by small GTPase Rab1B in the early secretory and autophagic pathways.</title>
        <authorList>
            <person name="Mochizuki Y."/>
            <person name="Ohashi R."/>
            <person name="Kawamura T."/>
            <person name="Iwanari H."/>
            <person name="Kodama T."/>
            <person name="Naito M."/>
            <person name="Hamakubo T."/>
        </authorList>
    </citation>
    <scope>FUNCTION</scope>
    <scope>SUBCELLULAR LOCATION</scope>
</reference>
<protein>
    <recommendedName>
        <fullName>Phosphatidylinositol-3,5-bisphosphate 3-phosphatase MTMR6</fullName>
        <ecNumber evidence="3">3.1.3.95</ecNumber>
    </recommendedName>
    <alternativeName>
        <fullName evidence="10">Myotubularin-related protein 6</fullName>
    </alternativeName>
    <alternativeName>
        <fullName evidence="3">Phosphatidylinositol-3-phosphate phosphatase</fullName>
    </alternativeName>
</protein>
<proteinExistence type="evidence at protein level"/>
<organism evidence="9">
    <name type="scientific">Rattus norvegicus</name>
    <name type="common">Rat</name>
    <dbReference type="NCBI Taxonomy" id="10116"/>
    <lineage>
        <taxon>Eukaryota</taxon>
        <taxon>Metazoa</taxon>
        <taxon>Chordata</taxon>
        <taxon>Craniata</taxon>
        <taxon>Vertebrata</taxon>
        <taxon>Euteleostomi</taxon>
        <taxon>Mammalia</taxon>
        <taxon>Eutheria</taxon>
        <taxon>Euarchontoglires</taxon>
        <taxon>Glires</taxon>
        <taxon>Rodentia</taxon>
        <taxon>Myomorpha</taxon>
        <taxon>Muroidea</taxon>
        <taxon>Muridae</taxon>
        <taxon>Murinae</taxon>
        <taxon>Rattus</taxon>
    </lineage>
</organism>
<sequence length="655" mass="75577">MEHIRTTKVEQVKLLDRFSTNNKSLTGTLYLTATHLLFIDAHQKETWILHHHIASVEKLALTTSGCPLVIQCKNFRIVHFIVPRERDCHDIYNSLLQLSKQAKYEDLYAFSYNPKQNDTERLNGWQLIDLAAEYERMGVPNANWQLSDANREYKVCETYPRELYVPRTASRPVIVGSSNFRSKGRLPVLSYCQQGTEAAICRCSQPLSGFSARCLEDEHLLQAISKANPGNRYMYVVDTRPKLRMQSWWDTQKDIGRIIVRISSKIWNDEKIRESDEKKRLNAMANRAAGKGYENEDNYSNIRFQFVGIENIHVMRSSLQKLLEVNGSKGLSVNDFYSGLESSGWLRHIKAVLDAAIFLAKAIVVENASVLVHCSDGWDRTSQVCSLGSLLLDSYYRTMKGFMVLIEKDWISFGHKFSERCGHLDGDPKEVSPVFTQFLECVWHLTEQFPQAFEFNEAFLLQIHEHIHSCQFGNFLGNCQKEREELRLKEKTYSLWPFLLADKKKYLNPLYSSKSQRLTVLEPNTASFNFKFWRNMYHQFDRTLHPRQSVLNIIMNMNEQNKQLEEDVKDLEAKIKQCKSGILTKDLLHAVHPESPSLKTSLCLKEQSLLPVKDTLRAVEGSSPADNRYCDYTEEFSKSEPAVVSLEYGVARMTC</sequence>
<comment type="function">
    <text evidence="3 7">Lipid phosphatase that specifically dephosphorylates the D-3 position of phosphatidylinositol 3-phosphate and phosphatidylinositol 3,5-bisphosphate, generating phosphatidylinositol and phosphatidylinositol 5-phosphate. Binds with high affinity to phosphatidylinositol 3,5-bisphosphate (PtdIns(3,5)P2) but also to phosphatidylinositol 3-phosphate (PtdIns(3)P), phosphatidylinositol 4-phosphate (PtdIns(4)P), and phosphatidylinositol 5-phosphate (PtdIns(5)P), phosphatidic acid and phosphatidylserine (By similarity). Negatively regulates ER-Golgi protein transport (PubMed:23188820). Probably in association with MTMR9, plays a role in the late stages of macropinocytosis by dephosphorylating phosphatidylinositol 3-phosphate in membrane ruffles. Acts as a negative regulator of KCNN4/KCa3.1 channel activity in CD4(+) T-cells possibly by decreasing intracellular levels of phosphatidylinositol 3-phosphate. Negatively regulates proliferation of reactivated CD4(+) T-cells. In complex with MTMR9, negatively regulates DNA damage-induced apoptosis. The formation of the MTMR6-MTMR9 complex stabilizes both MTMR6 and MTMR9 protein levels (By similarity).</text>
</comment>
<comment type="catalytic activity">
    <reaction evidence="3">
        <text>a 1,2-diacyl-sn-glycero-3-phospho-(1D-myo-inositol-3,5-bisphosphate) + H2O = a 1,2-diacyl-sn-glycero-3-phospho-(1D-myo-inositol-5-phosphate) + phosphate</text>
        <dbReference type="Rhea" id="RHEA:39019"/>
        <dbReference type="ChEBI" id="CHEBI:15377"/>
        <dbReference type="ChEBI" id="CHEBI:43474"/>
        <dbReference type="ChEBI" id="CHEBI:57795"/>
        <dbReference type="ChEBI" id="CHEBI:57923"/>
        <dbReference type="EC" id="3.1.3.95"/>
    </reaction>
</comment>
<comment type="catalytic activity">
    <reaction evidence="3">
        <text>a 1,2-diacyl-sn-glycero-3-phospho-(1D-myo-inositol-3-phosphate) + H2O = a 1,2-diacyl-sn-glycero-3-phospho-(1D-myo-inositol) + phosphate</text>
        <dbReference type="Rhea" id="RHEA:12316"/>
        <dbReference type="ChEBI" id="CHEBI:15377"/>
        <dbReference type="ChEBI" id="CHEBI:43474"/>
        <dbReference type="ChEBI" id="CHEBI:57880"/>
        <dbReference type="ChEBI" id="CHEBI:58088"/>
    </reaction>
</comment>
<comment type="catalytic activity">
    <reaction evidence="3">
        <text>1,2-dioctanoyl-sn-glycero-3-phospho-(1D-myo-inositol-3,5-bisphosphate) + H2O = 1,2-dioctanoyl-sn-glycero-3-phospho-(1D-myo-inositol-5-phosphate) + phosphate</text>
        <dbReference type="Rhea" id="RHEA:45632"/>
        <dbReference type="ChEBI" id="CHEBI:15377"/>
        <dbReference type="ChEBI" id="CHEBI:43474"/>
        <dbReference type="ChEBI" id="CHEBI:78911"/>
        <dbReference type="ChEBI" id="CHEBI:85342"/>
    </reaction>
</comment>
<comment type="catalytic activity">
    <reaction evidence="3">
        <text>1,2-dioctanoyl-sn-glycero-3-phospho-(1-D-myo-inositol-3-phosphate) + H2O = 1,2-dioctanoyl-sn-glycero-3-phospho-(1D-myo-inositol) + phosphate</text>
        <dbReference type="Rhea" id="RHEA:42328"/>
        <dbReference type="ChEBI" id="CHEBI:15377"/>
        <dbReference type="ChEBI" id="CHEBI:43474"/>
        <dbReference type="ChEBI" id="CHEBI:65221"/>
        <dbReference type="ChEBI" id="CHEBI:78934"/>
    </reaction>
</comment>
<comment type="activity regulation">
    <text evidence="3">Allosterically activated by phosphatidylserine and/or phosphatidylinositol 4-phosphate (PtdIns(4)P), and phosphatidylinositol 5-phosphate (PtdIns(5)P) (By similarity). Interaction with MTMR9 increases catalytic activity towards phosphatidylinositol 3,5-bisphosphate (By similarity).</text>
</comment>
<comment type="subunit">
    <text evidence="3">Homodimer. Heterodimer (via C-terminus) with MTMR9 (via C-terminus). Interacts with ALKBH4. Interacts with KCNN4. Interacts (via GRAM domain) with RAB1B (in GDP-bound form); the interaction regulates MTMR6 recruitment to the endoplasmic reticulum-Golgi intermediate compartment.</text>
</comment>
<comment type="subcellular location">
    <subcellularLocation>
        <location evidence="7">Cytoplasm</location>
    </subcellularLocation>
    <subcellularLocation>
        <location evidence="3">Endoplasmic reticulum</location>
    </subcellularLocation>
    <subcellularLocation>
        <location evidence="2">Cell projection</location>
        <location evidence="2">Ruffle membrane</location>
        <topology evidence="8">Peripheral membrane protein</topology>
        <orientation evidence="8">Cytoplasmic side</orientation>
    </subcellularLocation>
    <subcellularLocation>
        <location evidence="7">Endoplasmic reticulum-Golgi intermediate compartment</location>
    </subcellularLocation>
    <subcellularLocation>
        <location evidence="3">Cytoplasm</location>
        <location evidence="3">Perinuclear region</location>
    </subcellularLocation>
    <text evidence="2 3 7">Localizes to ruffles during EGF-induced macropinocytosis (By similarity). Colocalizes with MTMR9 to the perinuclear region (By similarity). Partially localizes to the endoplasmic reticulum (By similarity). Co-localizes with RAB1B to the endoplasmic reticulum-Golgi intermediate compartment and to the peri-Golgi region (PubMed:23188820).</text>
</comment>
<comment type="domain">
    <text evidence="2">The GRAM domain is required for cell membrane localization.</text>
</comment>
<comment type="domain">
    <text evidence="2">The C-terminus domain (aa 540-655) mediates interaction with MTMR9.</text>
</comment>
<comment type="similarity">
    <text evidence="4">Belongs to the protein-tyrosine phosphatase family. Non-receptor class myotubularin subfamily.</text>
</comment>
<keyword id="KW-1003">Cell membrane</keyword>
<keyword id="KW-0966">Cell projection</keyword>
<keyword id="KW-0175">Coiled coil</keyword>
<keyword id="KW-0963">Cytoplasm</keyword>
<keyword id="KW-0254">Endocytosis</keyword>
<keyword id="KW-0256">Endoplasmic reticulum</keyword>
<keyword id="KW-0378">Hydrolase</keyword>
<keyword id="KW-0443">Lipid metabolism</keyword>
<keyword id="KW-0472">Membrane</keyword>
<keyword id="KW-0597">Phosphoprotein</keyword>
<keyword id="KW-1185">Reference proteome</keyword>
<feature type="chain" id="PRO_0000446364" description="Phosphatidylinositol-3,5-bisphosphate 3-phosphatase MTMR6">
    <location>
        <begin position="1"/>
        <end position="655"/>
    </location>
</feature>
<feature type="domain" description="GRAM" evidence="4">
    <location>
        <begin position="1"/>
        <end position="101"/>
    </location>
</feature>
<feature type="domain" description="Myotubularin phosphatase" evidence="5">
    <location>
        <begin position="124"/>
        <end position="537"/>
    </location>
</feature>
<feature type="region of interest" description="Interaction with RAB1B" evidence="2">
    <location>
        <begin position="2"/>
        <end position="141"/>
    </location>
</feature>
<feature type="coiled-coil region" evidence="4">
    <location>
        <begin position="547"/>
        <end position="581"/>
    </location>
</feature>
<feature type="active site" description="Phosphocysteine intermediate" evidence="6">
    <location>
        <position position="374"/>
    </location>
</feature>
<feature type="binding site" evidence="1">
    <location>
        <position position="286"/>
    </location>
    <ligand>
        <name>a 1,2-diacyl-sn-glycero-3-phospho-(1D-myo-inositol-3,5-bisphosphate)</name>
        <dbReference type="ChEBI" id="CHEBI:57923"/>
    </ligand>
</feature>
<feature type="binding site" evidence="1">
    <location>
        <position position="286"/>
    </location>
    <ligand>
        <name>a 1,2-diacyl-sn-glycero-3-phospho-(1D-myo-inositol-3-phosphate)</name>
        <dbReference type="ChEBI" id="CHEBI:58088"/>
    </ligand>
</feature>
<feature type="binding site" evidence="1">
    <location>
        <position position="311"/>
    </location>
    <ligand>
        <name>a 1,2-diacyl-sn-glycero-3-phospho-(1D-myo-inositol-3,5-bisphosphate)</name>
        <dbReference type="ChEBI" id="CHEBI:57923"/>
    </ligand>
</feature>
<feature type="binding site" evidence="1">
    <location>
        <position position="311"/>
    </location>
    <ligand>
        <name>a 1,2-diacyl-sn-glycero-3-phospho-(1D-myo-inositol-3-phosphate)</name>
        <dbReference type="ChEBI" id="CHEBI:58088"/>
    </ligand>
</feature>
<feature type="binding site" evidence="1">
    <location>
        <position position="312"/>
    </location>
    <ligand>
        <name>a 1,2-diacyl-sn-glycero-3-phospho-(1D-myo-inositol-3,5-bisphosphate)</name>
        <dbReference type="ChEBI" id="CHEBI:57923"/>
    </ligand>
</feature>
<feature type="binding site" evidence="1">
    <location>
        <position position="312"/>
    </location>
    <ligand>
        <name>a 1,2-diacyl-sn-glycero-3-phospho-(1D-myo-inositol-3-phosphate)</name>
        <dbReference type="ChEBI" id="CHEBI:58088"/>
    </ligand>
</feature>
<feature type="binding site" evidence="1">
    <location>
        <position position="375"/>
    </location>
    <ligand>
        <name>a 1,2-diacyl-sn-glycero-3-phospho-(1D-myo-inositol-3,5-bisphosphate)</name>
        <dbReference type="ChEBI" id="CHEBI:57923"/>
    </ligand>
</feature>
<feature type="binding site" evidence="1">
    <location>
        <position position="375"/>
    </location>
    <ligand>
        <name>a 1,2-diacyl-sn-glycero-3-phospho-(1D-myo-inositol-3-phosphate)</name>
        <dbReference type="ChEBI" id="CHEBI:58088"/>
    </ligand>
</feature>
<feature type="binding site" evidence="1">
    <location>
        <position position="376"/>
    </location>
    <ligand>
        <name>a 1,2-diacyl-sn-glycero-3-phospho-(1D-myo-inositol-3,5-bisphosphate)</name>
        <dbReference type="ChEBI" id="CHEBI:57923"/>
    </ligand>
</feature>
<feature type="binding site" evidence="1">
    <location>
        <position position="376"/>
    </location>
    <ligand>
        <name>a 1,2-diacyl-sn-glycero-3-phospho-(1D-myo-inositol-3-phosphate)</name>
        <dbReference type="ChEBI" id="CHEBI:58088"/>
    </ligand>
</feature>
<feature type="binding site" evidence="1">
    <location>
        <position position="377"/>
    </location>
    <ligand>
        <name>a 1,2-diacyl-sn-glycero-3-phospho-(1D-myo-inositol-3,5-bisphosphate)</name>
        <dbReference type="ChEBI" id="CHEBI:57923"/>
    </ligand>
</feature>
<feature type="binding site" evidence="1">
    <location>
        <position position="377"/>
    </location>
    <ligand>
        <name>a 1,2-diacyl-sn-glycero-3-phospho-(1D-myo-inositol-3-phosphate)</name>
        <dbReference type="ChEBI" id="CHEBI:58088"/>
    </ligand>
</feature>
<feature type="binding site" evidence="1">
    <location>
        <position position="378"/>
    </location>
    <ligand>
        <name>a 1,2-diacyl-sn-glycero-3-phospho-(1D-myo-inositol-3,5-bisphosphate)</name>
        <dbReference type="ChEBI" id="CHEBI:57923"/>
    </ligand>
</feature>
<feature type="binding site" evidence="1">
    <location>
        <position position="378"/>
    </location>
    <ligand>
        <name>a 1,2-diacyl-sn-glycero-3-phospho-(1D-myo-inositol-3-phosphate)</name>
        <dbReference type="ChEBI" id="CHEBI:58088"/>
    </ligand>
</feature>
<feature type="binding site" evidence="1">
    <location>
        <position position="379"/>
    </location>
    <ligand>
        <name>a 1,2-diacyl-sn-glycero-3-phospho-(1D-myo-inositol-3,5-bisphosphate)</name>
        <dbReference type="ChEBI" id="CHEBI:57923"/>
    </ligand>
</feature>
<feature type="binding site" evidence="1">
    <location>
        <position position="379"/>
    </location>
    <ligand>
        <name>a 1,2-diacyl-sn-glycero-3-phospho-(1D-myo-inositol-3-phosphate)</name>
        <dbReference type="ChEBI" id="CHEBI:58088"/>
    </ligand>
</feature>
<feature type="binding site" evidence="1">
    <location>
        <position position="380"/>
    </location>
    <ligand>
        <name>a 1,2-diacyl-sn-glycero-3-phospho-(1D-myo-inositol-3,5-bisphosphate)</name>
        <dbReference type="ChEBI" id="CHEBI:57923"/>
    </ligand>
</feature>
<feature type="binding site" evidence="1">
    <location>
        <position position="380"/>
    </location>
    <ligand>
        <name>a 1,2-diacyl-sn-glycero-3-phospho-(1D-myo-inositol-3-phosphate)</name>
        <dbReference type="ChEBI" id="CHEBI:58088"/>
    </ligand>
</feature>
<feature type="binding site" evidence="1">
    <location>
        <position position="416"/>
    </location>
    <ligand>
        <name>a 1,2-diacyl-sn-glycero-3-phospho-(1D-myo-inositol-3,5-bisphosphate)</name>
        <dbReference type="ChEBI" id="CHEBI:57923"/>
    </ligand>
</feature>
<feature type="binding site" evidence="1">
    <location>
        <position position="420"/>
    </location>
    <ligand>
        <name>a 1,2-diacyl-sn-glycero-3-phospho-(1D-myo-inositol-3,5-bisphosphate)</name>
        <dbReference type="ChEBI" id="CHEBI:57923"/>
    </ligand>
</feature>
<feature type="binding site" evidence="1">
    <location>
        <position position="420"/>
    </location>
    <ligand>
        <name>a 1,2-diacyl-sn-glycero-3-phospho-(1D-myo-inositol-3-phosphate)</name>
        <dbReference type="ChEBI" id="CHEBI:58088"/>
    </ligand>
</feature>
<feature type="modified residue" description="Phosphotyrosine" evidence="2">
    <location>
        <position position="108"/>
    </location>
</feature>
<feature type="modified residue" description="Phosphoserine" evidence="3">
    <location>
        <position position="595"/>
    </location>
</feature>
<feature type="modified residue" description="Phosphoserine" evidence="3">
    <location>
        <position position="623"/>
    </location>
</feature>
<feature type="modified residue" description="Phosphoserine" evidence="3">
    <location>
        <position position="645"/>
    </location>
</feature>
<name>MTMR6_RAT</name>
<evidence type="ECO:0000250" key="1">
    <source>
        <dbReference type="UniProtKB" id="Q13614"/>
    </source>
</evidence>
<evidence type="ECO:0000250" key="2">
    <source>
        <dbReference type="UniProtKB" id="Q8VE11"/>
    </source>
</evidence>
<evidence type="ECO:0000250" key="3">
    <source>
        <dbReference type="UniProtKB" id="Q9Y217"/>
    </source>
</evidence>
<evidence type="ECO:0000255" key="4"/>
<evidence type="ECO:0000255" key="5">
    <source>
        <dbReference type="PROSITE-ProRule" id="PRU00669"/>
    </source>
</evidence>
<evidence type="ECO:0000255" key="6">
    <source>
        <dbReference type="PROSITE-ProRule" id="PRU10044"/>
    </source>
</evidence>
<evidence type="ECO:0000269" key="7">
    <source>
    </source>
</evidence>
<evidence type="ECO:0000305" key="8"/>
<evidence type="ECO:0000312" key="9">
    <source>
        <dbReference type="Proteomes" id="UP000002494"/>
    </source>
</evidence>
<evidence type="ECO:0000312" key="10">
    <source>
        <dbReference type="RGD" id="1305378"/>
    </source>
</evidence>
<evidence type="ECO:0007744" key="11">
    <source>
    </source>
</evidence>